<comment type="function">
    <text evidence="1">Component of the small ribosomal subunit. The ribosome is a large ribonucleoprotein complex responsible for the synthesis of proteins in the cell. Required for pre-rRNA processing and maturation of 40S ribosomal subunits.</text>
</comment>
<comment type="subunit">
    <text evidence="1">Component of the small ribosomal subunit.</text>
</comment>
<comment type="subcellular location">
    <subcellularLocation>
        <location evidence="1">Cytoplasm</location>
    </subcellularLocation>
    <subcellularLocation>
        <location evidence="1">Nucleus</location>
    </subcellularLocation>
</comment>
<comment type="similarity">
    <text evidence="2">Belongs to the eukaryotic ribosomal protein eS19 family.</text>
</comment>
<sequence>MPGVTVKDVNQQEFVRALAAFLKKSGKLKVPDWVDLVKLGRHKELAPSDENWFYIRAASTVRHLYLRGGAGVGSMTKIYGGRQRNGVCPAHYSEGSKNVARKVLQALELLKMIEKDPNGGRRLTAQGTRDLDRIAGQVSAASKKIVQ</sequence>
<organism>
    <name type="scientific">Gillichthys mirabilis</name>
    <name type="common">Long-jawed mudsucker</name>
    <dbReference type="NCBI Taxonomy" id="8222"/>
    <lineage>
        <taxon>Eukaryota</taxon>
        <taxon>Metazoa</taxon>
        <taxon>Chordata</taxon>
        <taxon>Craniata</taxon>
        <taxon>Vertebrata</taxon>
        <taxon>Euteleostomi</taxon>
        <taxon>Actinopterygii</taxon>
        <taxon>Neopterygii</taxon>
        <taxon>Teleostei</taxon>
        <taxon>Neoteleostei</taxon>
        <taxon>Acanthomorphata</taxon>
        <taxon>Gobiaria</taxon>
        <taxon>Gobiiformes</taxon>
        <taxon>Gobioidei</taxon>
        <taxon>Gobiidae</taxon>
        <taxon>Gobionellinae</taxon>
        <taxon>Gillichthys</taxon>
    </lineage>
</organism>
<reference key="1">
    <citation type="journal article" date="2001" name="Proc. Natl. Acad. Sci. U.S.A.">
        <title>Hypoxia-induced gene expression profiling in the euryoxic fish Gillichthys mirabilis.</title>
        <authorList>
            <person name="Gracey A.Y."/>
            <person name="Troll J.V."/>
            <person name="Somero G.N."/>
        </authorList>
    </citation>
    <scope>NUCLEOTIDE SEQUENCE [MRNA]</scope>
    <source>
        <tissue>Liver</tissue>
    </source>
</reference>
<feature type="chain" id="PRO_0000153815" description="Small ribosomal subunit protein eS19">
    <location>
        <begin position="1"/>
        <end position="147"/>
    </location>
</feature>
<accession>Q9DFR5</accession>
<evidence type="ECO:0000250" key="1">
    <source>
        <dbReference type="UniProtKB" id="P39019"/>
    </source>
</evidence>
<evidence type="ECO:0000305" key="2"/>
<name>RS19_GILMI</name>
<gene>
    <name type="primary">rps19</name>
</gene>
<proteinExistence type="evidence at transcript level"/>
<keyword id="KW-0963">Cytoplasm</keyword>
<keyword id="KW-0539">Nucleus</keyword>
<keyword id="KW-0687">Ribonucleoprotein</keyword>
<keyword id="KW-0689">Ribosomal protein</keyword>
<dbReference type="EMBL" id="AF266167">
    <property type="protein sequence ID" value="AAG13287.1"/>
    <property type="molecule type" value="mRNA"/>
</dbReference>
<dbReference type="SMR" id="Q9DFR5"/>
<dbReference type="GO" id="GO:0022627">
    <property type="term" value="C:cytosolic small ribosomal subunit"/>
    <property type="evidence" value="ECO:0007669"/>
    <property type="project" value="TreeGrafter"/>
</dbReference>
<dbReference type="GO" id="GO:0005634">
    <property type="term" value="C:nucleus"/>
    <property type="evidence" value="ECO:0007669"/>
    <property type="project" value="UniProtKB-SubCell"/>
</dbReference>
<dbReference type="GO" id="GO:0003723">
    <property type="term" value="F:RNA binding"/>
    <property type="evidence" value="ECO:0007669"/>
    <property type="project" value="TreeGrafter"/>
</dbReference>
<dbReference type="GO" id="GO:0003735">
    <property type="term" value="F:structural constituent of ribosome"/>
    <property type="evidence" value="ECO:0007669"/>
    <property type="project" value="InterPro"/>
</dbReference>
<dbReference type="GO" id="GO:0000028">
    <property type="term" value="P:ribosomal small subunit assembly"/>
    <property type="evidence" value="ECO:0007669"/>
    <property type="project" value="TreeGrafter"/>
</dbReference>
<dbReference type="GO" id="GO:0006412">
    <property type="term" value="P:translation"/>
    <property type="evidence" value="ECO:0007669"/>
    <property type="project" value="InterPro"/>
</dbReference>
<dbReference type="FunFam" id="1.10.10.10:FF:000255">
    <property type="entry name" value="40S ribosomal protein S19"/>
    <property type="match status" value="1"/>
</dbReference>
<dbReference type="Gene3D" id="1.10.10.10">
    <property type="entry name" value="Winged helix-like DNA-binding domain superfamily/Winged helix DNA-binding domain"/>
    <property type="match status" value="1"/>
</dbReference>
<dbReference type="InterPro" id="IPR001266">
    <property type="entry name" value="Ribosomal_eS19"/>
</dbReference>
<dbReference type="InterPro" id="IPR018277">
    <property type="entry name" value="Ribosomal_eS19_CS"/>
</dbReference>
<dbReference type="InterPro" id="IPR036388">
    <property type="entry name" value="WH-like_DNA-bd_sf"/>
</dbReference>
<dbReference type="InterPro" id="IPR036390">
    <property type="entry name" value="WH_DNA-bd_sf"/>
</dbReference>
<dbReference type="PANTHER" id="PTHR11710">
    <property type="entry name" value="40S RIBOSOMAL PROTEIN S19"/>
    <property type="match status" value="1"/>
</dbReference>
<dbReference type="PANTHER" id="PTHR11710:SF0">
    <property type="entry name" value="40S RIBOSOMAL PROTEIN S19"/>
    <property type="match status" value="1"/>
</dbReference>
<dbReference type="Pfam" id="PF01090">
    <property type="entry name" value="Ribosomal_S19e"/>
    <property type="match status" value="1"/>
</dbReference>
<dbReference type="SMART" id="SM01413">
    <property type="entry name" value="Ribosomal_S19e"/>
    <property type="match status" value="1"/>
</dbReference>
<dbReference type="SUPFAM" id="SSF46785">
    <property type="entry name" value="Winged helix' DNA-binding domain"/>
    <property type="match status" value="1"/>
</dbReference>
<dbReference type="PROSITE" id="PS00628">
    <property type="entry name" value="RIBOSOMAL_S19E"/>
    <property type="match status" value="1"/>
</dbReference>
<protein>
    <recommendedName>
        <fullName evidence="2">Small ribosomal subunit protein eS19</fullName>
    </recommendedName>
    <alternativeName>
        <fullName>40S ribosomal protein S19</fullName>
    </alternativeName>
</protein>